<feature type="chain" id="PRO_0000130961" description="Small ribosomal subunit protein uS14">
    <location>
        <begin position="1"/>
        <end position="101"/>
    </location>
</feature>
<dbReference type="EMBL" id="AE009442">
    <property type="protein sequence ID" value="AAO28329.1"/>
    <property type="molecule type" value="Genomic_DNA"/>
</dbReference>
<dbReference type="RefSeq" id="WP_004086535.1">
    <property type="nucleotide sequence ID" value="NC_004556.1"/>
</dbReference>
<dbReference type="SMR" id="Q87E69"/>
<dbReference type="GeneID" id="93904152"/>
<dbReference type="KEGG" id="xft:PD_0450"/>
<dbReference type="HOGENOM" id="CLU_139869_0_1_6"/>
<dbReference type="Proteomes" id="UP000002516">
    <property type="component" value="Chromosome"/>
</dbReference>
<dbReference type="GO" id="GO:0005737">
    <property type="term" value="C:cytoplasm"/>
    <property type="evidence" value="ECO:0007669"/>
    <property type="project" value="UniProtKB-ARBA"/>
</dbReference>
<dbReference type="GO" id="GO:0015935">
    <property type="term" value="C:small ribosomal subunit"/>
    <property type="evidence" value="ECO:0007669"/>
    <property type="project" value="TreeGrafter"/>
</dbReference>
<dbReference type="GO" id="GO:0019843">
    <property type="term" value="F:rRNA binding"/>
    <property type="evidence" value="ECO:0007669"/>
    <property type="project" value="UniProtKB-UniRule"/>
</dbReference>
<dbReference type="GO" id="GO:0003735">
    <property type="term" value="F:structural constituent of ribosome"/>
    <property type="evidence" value="ECO:0007669"/>
    <property type="project" value="InterPro"/>
</dbReference>
<dbReference type="GO" id="GO:0006412">
    <property type="term" value="P:translation"/>
    <property type="evidence" value="ECO:0007669"/>
    <property type="project" value="UniProtKB-UniRule"/>
</dbReference>
<dbReference type="FunFam" id="1.10.287.1480:FF:000001">
    <property type="entry name" value="30S ribosomal protein S14"/>
    <property type="match status" value="1"/>
</dbReference>
<dbReference type="Gene3D" id="1.10.287.1480">
    <property type="match status" value="1"/>
</dbReference>
<dbReference type="HAMAP" id="MF_00537">
    <property type="entry name" value="Ribosomal_uS14_1"/>
    <property type="match status" value="1"/>
</dbReference>
<dbReference type="InterPro" id="IPR001209">
    <property type="entry name" value="Ribosomal_uS14"/>
</dbReference>
<dbReference type="InterPro" id="IPR023036">
    <property type="entry name" value="Ribosomal_uS14_bac/plastid"/>
</dbReference>
<dbReference type="NCBIfam" id="NF006477">
    <property type="entry name" value="PRK08881.1"/>
    <property type="match status" value="1"/>
</dbReference>
<dbReference type="PANTHER" id="PTHR19836">
    <property type="entry name" value="30S RIBOSOMAL PROTEIN S14"/>
    <property type="match status" value="1"/>
</dbReference>
<dbReference type="PANTHER" id="PTHR19836:SF19">
    <property type="entry name" value="SMALL RIBOSOMAL SUBUNIT PROTEIN US14M"/>
    <property type="match status" value="1"/>
</dbReference>
<dbReference type="Pfam" id="PF00253">
    <property type="entry name" value="Ribosomal_S14"/>
    <property type="match status" value="1"/>
</dbReference>
<dbReference type="SUPFAM" id="SSF57716">
    <property type="entry name" value="Glucocorticoid receptor-like (DNA-binding domain)"/>
    <property type="match status" value="1"/>
</dbReference>
<gene>
    <name evidence="1" type="primary">rpsN</name>
    <name type="ordered locus">PD_0450</name>
</gene>
<organism>
    <name type="scientific">Xylella fastidiosa (strain Temecula1 / ATCC 700964)</name>
    <dbReference type="NCBI Taxonomy" id="183190"/>
    <lineage>
        <taxon>Bacteria</taxon>
        <taxon>Pseudomonadati</taxon>
        <taxon>Pseudomonadota</taxon>
        <taxon>Gammaproteobacteria</taxon>
        <taxon>Lysobacterales</taxon>
        <taxon>Lysobacteraceae</taxon>
        <taxon>Xylella</taxon>
    </lineage>
</organism>
<name>RS14_XYLFT</name>
<evidence type="ECO:0000255" key="1">
    <source>
        <dbReference type="HAMAP-Rule" id="MF_00537"/>
    </source>
</evidence>
<evidence type="ECO:0000305" key="2"/>
<protein>
    <recommendedName>
        <fullName evidence="1">Small ribosomal subunit protein uS14</fullName>
    </recommendedName>
    <alternativeName>
        <fullName evidence="2">30S ribosomal protein S14</fullName>
    </alternativeName>
</protein>
<sequence length="101" mass="11616">MAKISMINRDLKRKRLAKKFADKRLSLKKVISSYASSYEEKIEASCKLQKLPRDSSPTRLRNRCEISGRPRGVYCKFGLGRNKLREAAMRGDIPGLRKASW</sequence>
<comment type="function">
    <text evidence="1">Binds 16S rRNA, required for the assembly of 30S particles and may also be responsible for determining the conformation of the 16S rRNA at the A site.</text>
</comment>
<comment type="subunit">
    <text evidence="1">Part of the 30S ribosomal subunit. Contacts proteins S3 and S10.</text>
</comment>
<comment type="similarity">
    <text evidence="1">Belongs to the universal ribosomal protein uS14 family.</text>
</comment>
<reference key="1">
    <citation type="journal article" date="2003" name="J. Bacteriol.">
        <title>Comparative analyses of the complete genome sequences of Pierce's disease and citrus variegated chlorosis strains of Xylella fastidiosa.</title>
        <authorList>
            <person name="Van Sluys M.A."/>
            <person name="de Oliveira M.C."/>
            <person name="Monteiro-Vitorello C.B."/>
            <person name="Miyaki C.Y."/>
            <person name="Furlan L.R."/>
            <person name="Camargo L.E.A."/>
            <person name="da Silva A.C.R."/>
            <person name="Moon D.H."/>
            <person name="Takita M.A."/>
            <person name="Lemos E.G.M."/>
            <person name="Machado M.A."/>
            <person name="Ferro M.I.T."/>
            <person name="da Silva F.R."/>
            <person name="Goldman M.H.S."/>
            <person name="Goldman G.H."/>
            <person name="Lemos M.V.F."/>
            <person name="El-Dorry H."/>
            <person name="Tsai S.M."/>
            <person name="Carrer H."/>
            <person name="Carraro D.M."/>
            <person name="de Oliveira R.C."/>
            <person name="Nunes L.R."/>
            <person name="Siqueira W.J."/>
            <person name="Coutinho L.L."/>
            <person name="Kimura E.T."/>
            <person name="Ferro E.S."/>
            <person name="Harakava R."/>
            <person name="Kuramae E.E."/>
            <person name="Marino C.L."/>
            <person name="Giglioti E."/>
            <person name="Abreu I.L."/>
            <person name="Alves L.M.C."/>
            <person name="do Amaral A.M."/>
            <person name="Baia G.S."/>
            <person name="Blanco S.R."/>
            <person name="Brito M.S."/>
            <person name="Cannavan F.S."/>
            <person name="Celestino A.V."/>
            <person name="da Cunha A.F."/>
            <person name="Fenille R.C."/>
            <person name="Ferro J.A."/>
            <person name="Formighieri E.F."/>
            <person name="Kishi L.T."/>
            <person name="Leoni S.G."/>
            <person name="Oliveira A.R."/>
            <person name="Rosa V.E. Jr."/>
            <person name="Sassaki F.T."/>
            <person name="Sena J.A.D."/>
            <person name="de Souza A.A."/>
            <person name="Truffi D."/>
            <person name="Tsukumo F."/>
            <person name="Yanai G.M."/>
            <person name="Zaros L.G."/>
            <person name="Civerolo E.L."/>
            <person name="Simpson A.J.G."/>
            <person name="Almeida N.F. Jr."/>
            <person name="Setubal J.C."/>
            <person name="Kitajima J.P."/>
        </authorList>
    </citation>
    <scope>NUCLEOTIDE SEQUENCE [LARGE SCALE GENOMIC DNA]</scope>
    <source>
        <strain>Temecula1 / ATCC 700964</strain>
    </source>
</reference>
<accession>Q87E69</accession>
<keyword id="KW-1185">Reference proteome</keyword>
<keyword id="KW-0687">Ribonucleoprotein</keyword>
<keyword id="KW-0689">Ribosomal protein</keyword>
<keyword id="KW-0694">RNA-binding</keyword>
<keyword id="KW-0699">rRNA-binding</keyword>
<proteinExistence type="inferred from homology"/>